<protein>
    <recommendedName>
        <fullName evidence="1">Large ribosomal subunit protein bL19</fullName>
    </recommendedName>
    <alternativeName>
        <fullName evidence="2">50S ribosomal protein L19</fullName>
    </alternativeName>
</protein>
<dbReference type="EMBL" id="CP000416">
    <property type="protein sequence ID" value="ABJ64074.1"/>
    <property type="molecule type" value="Genomic_DNA"/>
</dbReference>
<dbReference type="RefSeq" id="WP_011667664.1">
    <property type="nucleotide sequence ID" value="NC_008497.1"/>
</dbReference>
<dbReference type="SMR" id="Q03RU8"/>
<dbReference type="STRING" id="387344.LVIS_0939"/>
<dbReference type="GeneID" id="56992841"/>
<dbReference type="KEGG" id="lbr:LVIS_0939"/>
<dbReference type="eggNOG" id="COG0335">
    <property type="taxonomic scope" value="Bacteria"/>
</dbReference>
<dbReference type="HOGENOM" id="CLU_103507_2_1_9"/>
<dbReference type="Proteomes" id="UP000001652">
    <property type="component" value="Chromosome"/>
</dbReference>
<dbReference type="GO" id="GO:0022625">
    <property type="term" value="C:cytosolic large ribosomal subunit"/>
    <property type="evidence" value="ECO:0007669"/>
    <property type="project" value="TreeGrafter"/>
</dbReference>
<dbReference type="GO" id="GO:0003735">
    <property type="term" value="F:structural constituent of ribosome"/>
    <property type="evidence" value="ECO:0007669"/>
    <property type="project" value="InterPro"/>
</dbReference>
<dbReference type="GO" id="GO:0006412">
    <property type="term" value="P:translation"/>
    <property type="evidence" value="ECO:0007669"/>
    <property type="project" value="UniProtKB-UniRule"/>
</dbReference>
<dbReference type="FunFam" id="2.30.30.790:FF:000001">
    <property type="entry name" value="50S ribosomal protein L19"/>
    <property type="match status" value="1"/>
</dbReference>
<dbReference type="Gene3D" id="2.30.30.790">
    <property type="match status" value="1"/>
</dbReference>
<dbReference type="HAMAP" id="MF_00402">
    <property type="entry name" value="Ribosomal_bL19"/>
    <property type="match status" value="1"/>
</dbReference>
<dbReference type="InterPro" id="IPR001857">
    <property type="entry name" value="Ribosomal_bL19"/>
</dbReference>
<dbReference type="InterPro" id="IPR018257">
    <property type="entry name" value="Ribosomal_bL19_CS"/>
</dbReference>
<dbReference type="InterPro" id="IPR038657">
    <property type="entry name" value="Ribosomal_bL19_sf"/>
</dbReference>
<dbReference type="InterPro" id="IPR008991">
    <property type="entry name" value="Translation_prot_SH3-like_sf"/>
</dbReference>
<dbReference type="NCBIfam" id="TIGR01024">
    <property type="entry name" value="rplS_bact"/>
    <property type="match status" value="1"/>
</dbReference>
<dbReference type="PANTHER" id="PTHR15680:SF9">
    <property type="entry name" value="LARGE RIBOSOMAL SUBUNIT PROTEIN BL19M"/>
    <property type="match status" value="1"/>
</dbReference>
<dbReference type="PANTHER" id="PTHR15680">
    <property type="entry name" value="RIBOSOMAL PROTEIN L19"/>
    <property type="match status" value="1"/>
</dbReference>
<dbReference type="Pfam" id="PF01245">
    <property type="entry name" value="Ribosomal_L19"/>
    <property type="match status" value="1"/>
</dbReference>
<dbReference type="PIRSF" id="PIRSF002191">
    <property type="entry name" value="Ribosomal_L19"/>
    <property type="match status" value="1"/>
</dbReference>
<dbReference type="PRINTS" id="PR00061">
    <property type="entry name" value="RIBOSOMALL19"/>
</dbReference>
<dbReference type="SUPFAM" id="SSF50104">
    <property type="entry name" value="Translation proteins SH3-like domain"/>
    <property type="match status" value="1"/>
</dbReference>
<dbReference type="PROSITE" id="PS01015">
    <property type="entry name" value="RIBOSOMAL_L19"/>
    <property type="match status" value="1"/>
</dbReference>
<organism>
    <name type="scientific">Levilactobacillus brevis (strain ATCC 367 / BCRC 12310 / CIP 105137 / JCM 1170 / LMG 11437 / NCIMB 947 / NCTC 947)</name>
    <name type="common">Lactobacillus brevis</name>
    <dbReference type="NCBI Taxonomy" id="387344"/>
    <lineage>
        <taxon>Bacteria</taxon>
        <taxon>Bacillati</taxon>
        <taxon>Bacillota</taxon>
        <taxon>Bacilli</taxon>
        <taxon>Lactobacillales</taxon>
        <taxon>Lactobacillaceae</taxon>
        <taxon>Levilactobacillus</taxon>
    </lineage>
</organism>
<evidence type="ECO:0000255" key="1">
    <source>
        <dbReference type="HAMAP-Rule" id="MF_00402"/>
    </source>
</evidence>
<evidence type="ECO:0000305" key="2"/>
<comment type="function">
    <text evidence="1">This protein is located at the 30S-50S ribosomal subunit interface and may play a role in the structure and function of the aminoacyl-tRNA binding site.</text>
</comment>
<comment type="similarity">
    <text evidence="1">Belongs to the bacterial ribosomal protein bL19 family.</text>
</comment>
<feature type="chain" id="PRO_1000049690" description="Large ribosomal subunit protein bL19">
    <location>
        <begin position="1"/>
        <end position="118"/>
    </location>
</feature>
<proteinExistence type="inferred from homology"/>
<name>RL19_LEVBA</name>
<accession>Q03RU8</accession>
<keyword id="KW-1185">Reference proteome</keyword>
<keyword id="KW-0687">Ribonucleoprotein</keyword>
<keyword id="KW-0689">Ribosomal protein</keyword>
<reference key="1">
    <citation type="journal article" date="2006" name="Proc. Natl. Acad. Sci. U.S.A.">
        <title>Comparative genomics of the lactic acid bacteria.</title>
        <authorList>
            <person name="Makarova K.S."/>
            <person name="Slesarev A."/>
            <person name="Wolf Y.I."/>
            <person name="Sorokin A."/>
            <person name="Mirkin B."/>
            <person name="Koonin E.V."/>
            <person name="Pavlov A."/>
            <person name="Pavlova N."/>
            <person name="Karamychev V."/>
            <person name="Polouchine N."/>
            <person name="Shakhova V."/>
            <person name="Grigoriev I."/>
            <person name="Lou Y."/>
            <person name="Rohksar D."/>
            <person name="Lucas S."/>
            <person name="Huang K."/>
            <person name="Goodstein D.M."/>
            <person name="Hawkins T."/>
            <person name="Plengvidhya V."/>
            <person name="Welker D."/>
            <person name="Hughes J."/>
            <person name="Goh Y."/>
            <person name="Benson A."/>
            <person name="Baldwin K."/>
            <person name="Lee J.-H."/>
            <person name="Diaz-Muniz I."/>
            <person name="Dosti B."/>
            <person name="Smeianov V."/>
            <person name="Wechter W."/>
            <person name="Barabote R."/>
            <person name="Lorca G."/>
            <person name="Altermann E."/>
            <person name="Barrangou R."/>
            <person name="Ganesan B."/>
            <person name="Xie Y."/>
            <person name="Rawsthorne H."/>
            <person name="Tamir D."/>
            <person name="Parker C."/>
            <person name="Breidt F."/>
            <person name="Broadbent J.R."/>
            <person name="Hutkins R."/>
            <person name="O'Sullivan D."/>
            <person name="Steele J."/>
            <person name="Unlu G."/>
            <person name="Saier M.H. Jr."/>
            <person name="Klaenhammer T."/>
            <person name="Richardson P."/>
            <person name="Kozyavkin S."/>
            <person name="Weimer B.C."/>
            <person name="Mills D.A."/>
        </authorList>
    </citation>
    <scope>NUCLEOTIDE SEQUENCE [LARGE SCALE GENOMIC DNA]</scope>
    <source>
        <strain>ATCC 367 / BCRC 12310 / CIP 105137 / JCM 1170 / LMG 11437 / NCIMB 947 / NCTC 947</strain>
    </source>
</reference>
<gene>
    <name evidence="1" type="primary">rplS</name>
    <name type="ordered locus">LVIS_0939</name>
</gene>
<sequence>MRQNNLIAKINQEQLRDDVPEFRAGDTVRVHARIVEGSRERIQLFEGVVIKRKGAGIQATYTVRKISNGVGVERIFPLHSPRVAKIDVIRQGRVRRAKLYYLRELNGKAARIPERRRN</sequence>